<keyword id="KW-0997">Cell inner membrane</keyword>
<keyword id="KW-1003">Cell membrane</keyword>
<keyword id="KW-0472">Membrane</keyword>
<keyword id="KW-1185">Reference proteome</keyword>
<keyword id="KW-0346">Stress response</keyword>
<keyword id="KW-0812">Transmembrane</keyword>
<keyword id="KW-1133">Transmembrane helix</keyword>
<keyword id="KW-0813">Transport</keyword>
<evidence type="ECO:0000255" key="1"/>
<evidence type="ECO:0000269" key="2">
    <source>
    </source>
</evidence>
<evidence type="ECO:0000269" key="3">
    <source>
    </source>
</evidence>
<evidence type="ECO:0000303" key="4">
    <source>
    </source>
</evidence>
<evidence type="ECO:0000305" key="5"/>
<name>BETT_ECOLI</name>
<feature type="chain" id="PRO_0000201484" description="High-affinity choline transport protein">
    <location>
        <begin position="1"/>
        <end position="677"/>
    </location>
</feature>
<feature type="transmembrane region" description="Helical" evidence="1">
    <location>
        <begin position="15"/>
        <end position="35"/>
    </location>
</feature>
<feature type="transmembrane region" description="Helical" evidence="1">
    <location>
        <begin position="54"/>
        <end position="74"/>
    </location>
</feature>
<feature type="transmembrane region" description="Helical" evidence="1">
    <location>
        <begin position="94"/>
        <end position="114"/>
    </location>
</feature>
<feature type="transmembrane region" description="Helical" evidence="1">
    <location>
        <begin position="144"/>
        <end position="164"/>
    </location>
</feature>
<feature type="transmembrane region" description="Helical" evidence="1">
    <location>
        <begin position="196"/>
        <end position="216"/>
    </location>
</feature>
<feature type="transmembrane region" description="Helical" evidence="1">
    <location>
        <begin position="233"/>
        <end position="253"/>
    </location>
</feature>
<feature type="transmembrane region" description="Helical" evidence="1">
    <location>
        <begin position="265"/>
        <end position="285"/>
    </location>
</feature>
<feature type="transmembrane region" description="Helical" evidence="1">
    <location>
        <begin position="319"/>
        <end position="339"/>
    </location>
</feature>
<feature type="transmembrane region" description="Helical" evidence="1">
    <location>
        <begin position="350"/>
        <end position="370"/>
    </location>
</feature>
<feature type="transmembrane region" description="Helical" evidence="1">
    <location>
        <begin position="412"/>
        <end position="432"/>
    </location>
</feature>
<feature type="transmembrane region" description="Helical" evidence="1">
    <location>
        <begin position="452"/>
        <end position="472"/>
    </location>
</feature>
<feature type="transmembrane region" description="Helical" evidence="1">
    <location>
        <begin position="477"/>
        <end position="497"/>
    </location>
</feature>
<organism>
    <name type="scientific">Escherichia coli (strain K12)</name>
    <dbReference type="NCBI Taxonomy" id="83333"/>
    <lineage>
        <taxon>Bacteria</taxon>
        <taxon>Pseudomonadati</taxon>
        <taxon>Pseudomonadota</taxon>
        <taxon>Gammaproteobacteria</taxon>
        <taxon>Enterobacterales</taxon>
        <taxon>Enterobacteriaceae</taxon>
        <taxon>Escherichia</taxon>
    </lineage>
</organism>
<comment type="function">
    <text evidence="3">High-affinity uptake of choline driven by a proton-motive force.</text>
</comment>
<comment type="catalytic activity">
    <reaction evidence="3">
        <text>choline(in) + H(+)(in) = choline(out) + H(+)(out)</text>
        <dbReference type="Rhea" id="RHEA:28843"/>
        <dbReference type="ChEBI" id="CHEBI:15354"/>
        <dbReference type="ChEBI" id="CHEBI:15378"/>
    </reaction>
    <physiologicalReaction direction="right-to-left" evidence="3">
        <dbReference type="Rhea" id="RHEA:28845"/>
    </physiologicalReaction>
</comment>
<comment type="activity regulation">
    <text evidence="3">The choline uptake activity is completely inhibited by the protonophore carbonyl cyanide 4-(trifluoromethoxy)phenylhydrazone (FCCP).</text>
</comment>
<comment type="pathway">
    <text evidence="5">Amine and polyamine biosynthesis; betaine biosynthesis via choline pathway.</text>
</comment>
<comment type="subcellular location">
    <subcellularLocation>
        <location evidence="2">Cell inner membrane</location>
        <topology evidence="1">Multi-pass membrane protein</topology>
    </subcellularLocation>
</comment>
<comment type="induction">
    <text evidence="3">By osmotic stress. Choline is required for full expression.</text>
</comment>
<comment type="similarity">
    <text evidence="5">Belongs to the BCCT transporter (TC 2.A.15) family.</text>
</comment>
<gene>
    <name evidence="4" type="primary">betT</name>
    <name type="ordered locus">b0314</name>
    <name type="ordered locus">JW0306</name>
</gene>
<proteinExistence type="evidence at protein level"/>
<dbReference type="EMBL" id="X52905">
    <property type="protein sequence ID" value="CAA37090.1"/>
    <property type="molecule type" value="Genomic_DNA"/>
</dbReference>
<dbReference type="EMBL" id="U73857">
    <property type="protein sequence ID" value="AAB18040.1"/>
    <property type="molecule type" value="Genomic_DNA"/>
</dbReference>
<dbReference type="EMBL" id="U00096">
    <property type="protein sequence ID" value="AAC73417.1"/>
    <property type="molecule type" value="Genomic_DNA"/>
</dbReference>
<dbReference type="EMBL" id="AP009048">
    <property type="protein sequence ID" value="BAE76097.1"/>
    <property type="molecule type" value="Genomic_DNA"/>
</dbReference>
<dbReference type="PIR" id="S15179">
    <property type="entry name" value="S15179"/>
</dbReference>
<dbReference type="RefSeq" id="NP_414848.1">
    <property type="nucleotide sequence ID" value="NC_000913.3"/>
</dbReference>
<dbReference type="RefSeq" id="WP_000131044.1">
    <property type="nucleotide sequence ID" value="NZ_STEB01000020.1"/>
</dbReference>
<dbReference type="SMR" id="P0ABC9"/>
<dbReference type="BioGRID" id="4262802">
    <property type="interactions" value="218"/>
</dbReference>
<dbReference type="FunCoup" id="P0ABC9">
    <property type="interactions" value="328"/>
</dbReference>
<dbReference type="STRING" id="511145.b0314"/>
<dbReference type="TCDB" id="2.A.15.1.4">
    <property type="family name" value="the betaine/carnitine/choline transporter (bcct) family"/>
</dbReference>
<dbReference type="PaxDb" id="511145-b0314"/>
<dbReference type="EnsemblBacteria" id="AAC73417">
    <property type="protein sequence ID" value="AAC73417"/>
    <property type="gene ID" value="b0314"/>
</dbReference>
<dbReference type="GeneID" id="75206484"/>
<dbReference type="GeneID" id="945079"/>
<dbReference type="KEGG" id="ecj:JW0306"/>
<dbReference type="KEGG" id="eco:b0314"/>
<dbReference type="KEGG" id="ecoc:C3026_01535"/>
<dbReference type="KEGG" id="ecoc:C3026_24710"/>
<dbReference type="PATRIC" id="fig|1411691.4.peg.1963"/>
<dbReference type="EchoBASE" id="EB0110"/>
<dbReference type="eggNOG" id="COG1292">
    <property type="taxonomic scope" value="Bacteria"/>
</dbReference>
<dbReference type="HOGENOM" id="CLU_010118_3_1_6"/>
<dbReference type="InParanoid" id="P0ABC9"/>
<dbReference type="OMA" id="WAMYALM"/>
<dbReference type="OrthoDB" id="9775735at2"/>
<dbReference type="PhylomeDB" id="P0ABC9"/>
<dbReference type="BioCyc" id="EcoCyc:BETT-MONOMER"/>
<dbReference type="BioCyc" id="MetaCyc:BETT-MONOMER"/>
<dbReference type="UniPathway" id="UPA00529"/>
<dbReference type="PRO" id="PR:P0ABC9"/>
<dbReference type="Proteomes" id="UP000000625">
    <property type="component" value="Chromosome"/>
</dbReference>
<dbReference type="GO" id="GO:0005886">
    <property type="term" value="C:plasma membrane"/>
    <property type="evidence" value="ECO:0000314"/>
    <property type="project" value="EcoCyc"/>
</dbReference>
<dbReference type="GO" id="GO:0015220">
    <property type="term" value="F:choline transmembrane transporter activity"/>
    <property type="evidence" value="ECO:0000269"/>
    <property type="project" value="EcoCyc"/>
</dbReference>
<dbReference type="GO" id="GO:0022857">
    <property type="term" value="F:transmembrane transporter activity"/>
    <property type="evidence" value="ECO:0000318"/>
    <property type="project" value="GO_Central"/>
</dbReference>
<dbReference type="GO" id="GO:0015871">
    <property type="term" value="P:choline transport"/>
    <property type="evidence" value="ECO:0000269"/>
    <property type="project" value="EcoCyc"/>
</dbReference>
<dbReference type="GO" id="GO:0006974">
    <property type="term" value="P:DNA damage response"/>
    <property type="evidence" value="ECO:0000270"/>
    <property type="project" value="EcoliWiki"/>
</dbReference>
<dbReference type="GO" id="GO:0019285">
    <property type="term" value="P:glycine betaine biosynthetic process from choline"/>
    <property type="evidence" value="ECO:0007669"/>
    <property type="project" value="UniProtKB-UniPathway"/>
</dbReference>
<dbReference type="InterPro" id="IPR018093">
    <property type="entry name" value="BCCT_CS"/>
</dbReference>
<dbReference type="InterPro" id="IPR000060">
    <property type="entry name" value="BCCT_transptr"/>
</dbReference>
<dbReference type="NCBIfam" id="TIGR00842">
    <property type="entry name" value="bcct"/>
    <property type="match status" value="1"/>
</dbReference>
<dbReference type="NCBIfam" id="NF007399">
    <property type="entry name" value="PRK09928.1"/>
    <property type="match status" value="1"/>
</dbReference>
<dbReference type="PANTHER" id="PTHR30047:SF7">
    <property type="entry name" value="HIGH-AFFINITY CHOLINE TRANSPORT PROTEIN"/>
    <property type="match status" value="1"/>
</dbReference>
<dbReference type="PANTHER" id="PTHR30047">
    <property type="entry name" value="HIGH-AFFINITY CHOLINE TRANSPORT PROTEIN-RELATED"/>
    <property type="match status" value="1"/>
</dbReference>
<dbReference type="Pfam" id="PF02028">
    <property type="entry name" value="BCCT"/>
    <property type="match status" value="1"/>
</dbReference>
<dbReference type="PROSITE" id="PS01303">
    <property type="entry name" value="BCCT"/>
    <property type="match status" value="1"/>
</dbReference>
<accession>P0ABC9</accession>
<accession>P17447</accession>
<accession>Q2MCA9</accession>
<sequence>MTDLSHSREKDKINPVVFYTSAGLILLFSLTTILFRDFSALWIGRTLDWVSKTFGWYYLLAATLYIVFVVCIACSRFGSVKLGPEQSKPEFSLLSWAAMLFAAGIGIDLMFFSVAEPVTQYMQPPEGAGQTIEAARQAMVWTLFHYGLTGWSMYALMGMALGYFSYRYNLPLTIRSALYPIFGKRINGPIGHSVDIAAVIGTIFGIATTLGIGVVQLNYGLSVLFDIPDSMAAKAALIALSVIIATISVTSGVDKGIRVLSELNVALALGLILFVLFMGDTSFLLNALVLNVGDYVNRFMGMTLNSFAFDRPVEWMNNWTLFFWAWWVAWSPFVGLFLARISRGRTIRQFVLGTLIIPFTFTLLWLSVFGNSALYEIIHGGAAFAEEAMVHPERGFYSLLAQYPAFTFSASVATITGLLFYVTSADSGALVLGNFTSQLKDINSDAPGWLRVFWSVAIGLLTLGMLMTNGISALQNTTVIMGLPFSFVIFFVMAGLYKSLKVEDYRRESANRDTAPRPLGLQDRLSWKKRLSRLMNYPGTRYTKQMMETVCYPAMEEVAQELRLRGAYVELKSLPPEEGQQLGHLDLLVHMGEEQNFVYQIWPQQYSVPGFTYRARSGKSTYYRLETFLLEGSQGNDLMDYSKEQVITDILDQYERHLNFIHLHREAPGHSVMFPDA</sequence>
<reference key="1">
    <citation type="journal article" date="1991" name="Mol. Microbiol.">
        <title>DNA sequence and analysis of the bet genes encoding the osmoregulatory choline-glycine betaine pathway of Escherichia coli.</title>
        <authorList>
            <person name="Lamark T."/>
            <person name="Kaasen E."/>
            <person name="Eshoo M.W."/>
            <person name="Falkenberg P."/>
            <person name="McDougall J."/>
            <person name="Strom A.R."/>
        </authorList>
    </citation>
    <scope>NUCLEOTIDE SEQUENCE [GENOMIC DNA]</scope>
    <scope>FUNCTION</scope>
    <scope>CATALYTIC ACTIVITY</scope>
    <scope>ACTIVITY REGULATION</scope>
    <scope>INDUCTION</scope>
    <source>
        <strain>K12</strain>
    </source>
</reference>
<reference key="2">
    <citation type="submission" date="1997-01" db="EMBL/GenBank/DDBJ databases">
        <title>Sequence of minutes 4-25 of Escherichia coli.</title>
        <authorList>
            <person name="Chung E."/>
            <person name="Allen E."/>
            <person name="Araujo R."/>
            <person name="Aparicio A.M."/>
            <person name="Davis K."/>
            <person name="Duncan M."/>
            <person name="Federspiel N."/>
            <person name="Hyman R."/>
            <person name="Kalman S."/>
            <person name="Komp C."/>
            <person name="Kurdi O."/>
            <person name="Lew H."/>
            <person name="Lin D."/>
            <person name="Namath A."/>
            <person name="Oefner P."/>
            <person name="Roberts D."/>
            <person name="Schramm S."/>
            <person name="Davis R.W."/>
        </authorList>
    </citation>
    <scope>NUCLEOTIDE SEQUENCE [LARGE SCALE GENOMIC DNA]</scope>
    <source>
        <strain>K12 / MG1655 / ATCC 47076</strain>
    </source>
</reference>
<reference key="3">
    <citation type="journal article" date="1997" name="Science">
        <title>The complete genome sequence of Escherichia coli K-12.</title>
        <authorList>
            <person name="Blattner F.R."/>
            <person name="Plunkett G. III"/>
            <person name="Bloch C.A."/>
            <person name="Perna N.T."/>
            <person name="Burland V."/>
            <person name="Riley M."/>
            <person name="Collado-Vides J."/>
            <person name="Glasner J.D."/>
            <person name="Rode C.K."/>
            <person name="Mayhew G.F."/>
            <person name="Gregor J."/>
            <person name="Davis N.W."/>
            <person name="Kirkpatrick H.A."/>
            <person name="Goeden M.A."/>
            <person name="Rose D.J."/>
            <person name="Mau B."/>
            <person name="Shao Y."/>
        </authorList>
    </citation>
    <scope>NUCLEOTIDE SEQUENCE [LARGE SCALE GENOMIC DNA]</scope>
    <source>
        <strain>K12 / MG1655 / ATCC 47076</strain>
    </source>
</reference>
<reference key="4">
    <citation type="journal article" date="2006" name="Mol. Syst. Biol.">
        <title>Highly accurate genome sequences of Escherichia coli K-12 strains MG1655 and W3110.</title>
        <authorList>
            <person name="Hayashi K."/>
            <person name="Morooka N."/>
            <person name="Yamamoto Y."/>
            <person name="Fujita K."/>
            <person name="Isono K."/>
            <person name="Choi S."/>
            <person name="Ohtsubo E."/>
            <person name="Baba T."/>
            <person name="Wanner B.L."/>
            <person name="Mori H."/>
            <person name="Horiuchi T."/>
        </authorList>
    </citation>
    <scope>NUCLEOTIDE SEQUENCE [LARGE SCALE GENOMIC DNA]</scope>
    <source>
        <strain>K12 / W3110 / ATCC 27325 / DSM 5911</strain>
    </source>
</reference>
<reference key="5">
    <citation type="journal article" date="2005" name="Science">
        <title>Global topology analysis of the Escherichia coli inner membrane proteome.</title>
        <authorList>
            <person name="Daley D.O."/>
            <person name="Rapp M."/>
            <person name="Granseth E."/>
            <person name="Melen K."/>
            <person name="Drew D."/>
            <person name="von Heijne G."/>
        </authorList>
    </citation>
    <scope>SUBCELLULAR LOCATION</scope>
    <source>
        <strain>K12 / MG1655 / ATCC 47076</strain>
    </source>
</reference>
<protein>
    <recommendedName>
        <fullName evidence="5">High-affinity choline transport protein</fullName>
    </recommendedName>
</protein>